<accession>Q82EB0</accession>
<keyword id="KW-1003">Cell membrane</keyword>
<keyword id="KW-0449">Lipoprotein</keyword>
<keyword id="KW-0472">Membrane</keyword>
<keyword id="KW-0564">Palmitate</keyword>
<keyword id="KW-1185">Reference proteome</keyword>
<keyword id="KW-0732">Signal</keyword>
<gene>
    <name type="primary">cseA</name>
    <name type="ordered locus">SAV_4705</name>
</gene>
<protein>
    <recommendedName>
        <fullName>Lipoprotein CseA</fullName>
    </recommendedName>
</protein>
<comment type="function">
    <text evidence="1">May be involved in the stabilization of the cell envelope or may interact with the sensor protein CseC to modulate its activity, in response to cell envelope stress.</text>
</comment>
<comment type="subcellular location">
    <subcellularLocation>
        <location evidence="2">Cell membrane</location>
        <topology evidence="2">Lipid-anchor</topology>
    </subcellularLocation>
</comment>
<comment type="sequence caution" evidence="4">
    <conflict type="erroneous initiation">
        <sequence resource="EMBL-CDS" id="BAC72417"/>
    </conflict>
</comment>
<proteinExistence type="inferred from homology"/>
<organism>
    <name type="scientific">Streptomyces avermitilis (strain ATCC 31267 / DSM 46492 / JCM 5070 / NBRC 14893 / NCIMB 12804 / NRRL 8165 / MA-4680)</name>
    <dbReference type="NCBI Taxonomy" id="227882"/>
    <lineage>
        <taxon>Bacteria</taxon>
        <taxon>Bacillati</taxon>
        <taxon>Actinomycetota</taxon>
        <taxon>Actinomycetes</taxon>
        <taxon>Kitasatosporales</taxon>
        <taxon>Streptomycetaceae</taxon>
        <taxon>Streptomyces</taxon>
    </lineage>
</organism>
<dbReference type="EMBL" id="BA000030">
    <property type="protein sequence ID" value="BAC72417.1"/>
    <property type="status" value="ALT_INIT"/>
    <property type="molecule type" value="Genomic_DNA"/>
</dbReference>
<dbReference type="RefSeq" id="WP_037652360.1">
    <property type="nucleotide sequence ID" value="NZ_JZJK01000054.1"/>
</dbReference>
<dbReference type="GeneID" id="41541785"/>
<dbReference type="KEGG" id="sma:SAVERM_4705"/>
<dbReference type="eggNOG" id="ENOG502ZWYH">
    <property type="taxonomic scope" value="Bacteria"/>
</dbReference>
<dbReference type="HOGENOM" id="CLU_078792_0_0_11"/>
<dbReference type="OrthoDB" id="3824278at2"/>
<dbReference type="Proteomes" id="UP000000428">
    <property type="component" value="Chromosome"/>
</dbReference>
<dbReference type="GO" id="GO:0005886">
    <property type="term" value="C:plasma membrane"/>
    <property type="evidence" value="ECO:0007669"/>
    <property type="project" value="UniProtKB-SubCell"/>
</dbReference>
<dbReference type="PROSITE" id="PS51257">
    <property type="entry name" value="PROKAR_LIPOPROTEIN"/>
    <property type="match status" value="1"/>
</dbReference>
<name>CSEA_STRAW</name>
<feature type="signal peptide" evidence="2">
    <location>
        <begin position="1"/>
        <end position="34"/>
    </location>
</feature>
<feature type="chain" id="PRO_0000314478" description="Lipoprotein CseA">
    <location>
        <begin position="35"/>
        <end position="217"/>
    </location>
</feature>
<feature type="region of interest" description="Disordered" evidence="3">
    <location>
        <begin position="39"/>
        <end position="66"/>
    </location>
</feature>
<feature type="region of interest" description="Disordered" evidence="3">
    <location>
        <begin position="192"/>
        <end position="217"/>
    </location>
</feature>
<feature type="lipid moiety-binding region" description="N-palmitoyl cysteine" evidence="2">
    <location>
        <position position="35"/>
    </location>
</feature>
<feature type="lipid moiety-binding region" description="S-diacylglycerol cysteine" evidence="2">
    <location>
        <position position="35"/>
    </location>
</feature>
<reference key="1">
    <citation type="journal article" date="2001" name="Proc. Natl. Acad. Sci. U.S.A.">
        <title>Genome sequence of an industrial microorganism Streptomyces avermitilis: deducing the ability of producing secondary metabolites.</title>
        <authorList>
            <person name="Omura S."/>
            <person name="Ikeda H."/>
            <person name="Ishikawa J."/>
            <person name="Hanamoto A."/>
            <person name="Takahashi C."/>
            <person name="Shinose M."/>
            <person name="Takahashi Y."/>
            <person name="Horikawa H."/>
            <person name="Nakazawa H."/>
            <person name="Osonoe T."/>
            <person name="Kikuchi H."/>
            <person name="Shiba T."/>
            <person name="Sakaki Y."/>
            <person name="Hattori M."/>
        </authorList>
    </citation>
    <scope>NUCLEOTIDE SEQUENCE [LARGE SCALE GENOMIC DNA]</scope>
    <source>
        <strain>ATCC 31267 / DSM 46492 / JCM 5070 / NBRC 14893 / NCIMB 12804 / NRRL 8165 / MA-4680</strain>
    </source>
</reference>
<reference key="2">
    <citation type="journal article" date="2003" name="Nat. Biotechnol.">
        <title>Complete genome sequence and comparative analysis of the industrial microorganism Streptomyces avermitilis.</title>
        <authorList>
            <person name="Ikeda H."/>
            <person name="Ishikawa J."/>
            <person name="Hanamoto A."/>
            <person name="Shinose M."/>
            <person name="Kikuchi H."/>
            <person name="Shiba T."/>
            <person name="Sakaki Y."/>
            <person name="Hattori M."/>
            <person name="Omura S."/>
        </authorList>
    </citation>
    <scope>NUCLEOTIDE SEQUENCE [LARGE SCALE GENOMIC DNA]</scope>
    <source>
        <strain>ATCC 31267 / DSM 46492 / JCM 5070 / NBRC 14893 / NCIMB 12804 / NRRL 8165 / MA-4680</strain>
    </source>
</reference>
<evidence type="ECO:0000250" key="1"/>
<evidence type="ECO:0000255" key="2">
    <source>
        <dbReference type="PROSITE-ProRule" id="PRU00303"/>
    </source>
</evidence>
<evidence type="ECO:0000256" key="3">
    <source>
        <dbReference type="SAM" id="MobiDB-lite"/>
    </source>
</evidence>
<evidence type="ECO:0000305" key="4"/>
<sequence length="217" mass="22396">MRGLGTESLRARGALKAAIAAVAGLAVLGLSVSACGTGGTGARDEGPAGSDSVAAGAATPTVSPSKAPKSVDAVKLVKDDPKVGAAVKRALKPCVADEYPVDVSYGDLTGGSADDIVVNVMTCGDAVGIGSYVYREQGHSYENVFRAEEPPVYAEIDRGELVVTQQMYEKDDPVSYPSSEEVITYSWSANRFSEESRTHTEYSNAVGGTDSATPAPN</sequence>